<sequence>MKPSAVNQILQQTQHFFARFDVHLPPFAHFSPAVWQQLDRQPWQEVFDLKLGWDVTAFGDDDFARKGLTLFTLRNGSPGGKPYAKGYAEKIMHCREAQVTPMHFHWRKREDIINRGGGNLIVELHNADTRDGLAETAVTVTLDGCRQTHAAGSRLRLAPGESICLTPAIYHSFWGEEGFGDVLVGEVSTVNDDDNDNRFLQPLSRFSQIEEDQPPQWLLCHEYLRFIA</sequence>
<evidence type="ECO:0000250" key="1">
    <source>
        <dbReference type="UniProtKB" id="A0A6M7H989"/>
    </source>
</evidence>
<evidence type="ECO:0000269" key="2">
    <source>
    </source>
</evidence>
<evidence type="ECO:0000305" key="3"/>
<evidence type="ECO:0000312" key="4">
    <source>
        <dbReference type="EMBL" id="BAJ07463.1"/>
    </source>
</evidence>
<name>DLMIS_SERPR</name>
<accession>D5MTT1</accession>
<keyword id="KW-0119">Carbohydrate metabolism</keyword>
<keyword id="KW-0413">Isomerase</keyword>
<keyword id="KW-0464">Manganese</keyword>
<keyword id="KW-0479">Metal-binding</keyword>
<organism>
    <name type="scientific">Serratia proteamaculans</name>
    <dbReference type="NCBI Taxonomy" id="28151"/>
    <lineage>
        <taxon>Bacteria</taxon>
        <taxon>Pseudomonadati</taxon>
        <taxon>Pseudomonadota</taxon>
        <taxon>Gammaproteobacteria</taxon>
        <taxon>Enterobacterales</taxon>
        <taxon>Yersiniaceae</taxon>
        <taxon>Serratia</taxon>
    </lineage>
</organism>
<protein>
    <recommendedName>
        <fullName evidence="3">D-lyxose/D-mannose isomerase</fullName>
        <ecNumber evidence="2">5.3.1.15</ecNumber>
        <ecNumber evidence="2">5.3.1.7</ecNumber>
    </recommendedName>
</protein>
<comment type="function">
    <text evidence="2">Sugar isomerase that catalyzes the reversible isomerization of D-lyxose to D-xylulose, and D-mannose to D-fructose (PubMed:20695994). Shows optimum activity using D-lyxose as substrate, but can also effectively catalyze the isomerization between D-fructose and D-mannose (PubMed:20695994). Shows lower activity with L-gulose, D-talose and L-ribose (PubMed:20695994).</text>
</comment>
<comment type="catalytic activity">
    <reaction evidence="2">
        <text>D-lyxose = D-xylulose</text>
        <dbReference type="Rhea" id="RHEA:14201"/>
        <dbReference type="ChEBI" id="CHEBI:16789"/>
        <dbReference type="ChEBI" id="CHEBI:17140"/>
        <dbReference type="EC" id="5.3.1.15"/>
    </reaction>
</comment>
<comment type="catalytic activity">
    <reaction evidence="2">
        <text>D-mannose = D-fructose</text>
        <dbReference type="Rhea" id="RHEA:22604"/>
        <dbReference type="ChEBI" id="CHEBI:4208"/>
        <dbReference type="ChEBI" id="CHEBI:37721"/>
        <dbReference type="EC" id="5.3.1.7"/>
    </reaction>
</comment>
<comment type="cofactor">
    <cofactor evidence="2">
        <name>Mn(2+)</name>
        <dbReference type="ChEBI" id="CHEBI:29035"/>
    </cofactor>
</comment>
<comment type="biophysicochemical properties">
    <kinetics>
        <KM evidence="2">13.3 mM for D-lyxose</KM>
        <KM evidence="2">32.2 mM for D-mannose</KM>
        <KM evidence="2">3.83 mM for D-xylulose</KM>
        <KM evidence="2">19.4 mM for D-fructose</KM>
        <text evidence="2">kcat is 30810 sec(-1) with D-lyxose as substrate. kcat is 16170 sec(-1) with D-mannose as substrate. kcat is 31620 sec(-1) with D-xylulose as substrate. kcat is 4297 sec(-1) with D-fructose as substrate.</text>
    </kinetics>
    <phDependence>
        <text evidence="2">Optimum pH is 7.5.</text>
    </phDependence>
    <temperatureDependence>
        <text evidence="2">Optimum temperature is 40 degrees Celsius.</text>
    </temperatureDependence>
</comment>
<comment type="subunit">
    <text evidence="2">Homodimer.</text>
</comment>
<comment type="similarity">
    <text evidence="3">Belongs to the D-lyxose ketol-isomerase family.</text>
</comment>
<gene>
    <name evidence="4" type="primary">lyxi</name>
</gene>
<proteinExistence type="evidence at protein level"/>
<reference key="1">
    <citation type="journal article" date="2010" name="Lett. Appl. Microbiol.">
        <title>Substrate specificity of a recombinant D-lyxose isomerase from Serratia proteamaculans that produces D-lyxose and D-mannose.</title>
        <authorList>
            <person name="Park C.-S."/>
            <person name="Yeom S.-J."/>
            <person name="Lim Y.-R."/>
            <person name="Kim Y.-S."/>
            <person name="Oh D.-K."/>
        </authorList>
    </citation>
    <scope>NUCLEOTIDE SEQUENCE [GENOMIC DNA]</scope>
    <scope>FUNCTION</scope>
    <scope>CATALYTIC ACTIVITY</scope>
    <scope>COFACTOR</scope>
    <scope>BIOPHYSICOCHEMICAL PROPERTIES</scope>
    <scope>SUBUNIT</scope>
    <source>
        <strain>KCTC 2936</strain>
    </source>
</reference>
<feature type="chain" id="PRO_0000455824" description="D-lyxose/D-mannose isomerase">
    <location>
        <begin position="1"/>
        <end position="228"/>
    </location>
</feature>
<feature type="binding site" evidence="1">
    <location>
        <position position="103"/>
    </location>
    <ligand>
        <name>Mn(2+)</name>
        <dbReference type="ChEBI" id="CHEBI:29035"/>
    </ligand>
</feature>
<feature type="binding site" evidence="1">
    <location>
        <position position="105"/>
    </location>
    <ligand>
        <name>Mn(2+)</name>
        <dbReference type="ChEBI" id="CHEBI:29035"/>
    </ligand>
</feature>
<feature type="binding site" evidence="1">
    <location>
        <position position="110"/>
    </location>
    <ligand>
        <name>Mn(2+)</name>
        <dbReference type="ChEBI" id="CHEBI:29035"/>
    </ligand>
</feature>
<feature type="binding site" evidence="1">
    <location>
        <position position="171"/>
    </location>
    <ligand>
        <name>Mn(2+)</name>
        <dbReference type="ChEBI" id="CHEBI:29035"/>
    </ligand>
</feature>
<dbReference type="EC" id="5.3.1.15" evidence="2"/>
<dbReference type="EC" id="5.3.1.7" evidence="2"/>
<dbReference type="EMBL" id="AB559947">
    <property type="protein sequence ID" value="BAJ07463.1"/>
    <property type="molecule type" value="Genomic_DNA"/>
</dbReference>
<dbReference type="SMR" id="D5MTT1"/>
<dbReference type="BRENDA" id="5.3.1.15">
    <property type="organism ID" value="8756"/>
</dbReference>
<dbReference type="GO" id="GO:0047828">
    <property type="term" value="F:D-lyxose ketol-isomerase activity"/>
    <property type="evidence" value="ECO:0007669"/>
    <property type="project" value="UniProtKB-EC"/>
</dbReference>
<dbReference type="GO" id="GO:0050089">
    <property type="term" value="F:mannose isomerase activity"/>
    <property type="evidence" value="ECO:0007669"/>
    <property type="project" value="RHEA"/>
</dbReference>
<dbReference type="GO" id="GO:0046872">
    <property type="term" value="F:metal ion binding"/>
    <property type="evidence" value="ECO:0007669"/>
    <property type="project" value="UniProtKB-KW"/>
</dbReference>
<dbReference type="CDD" id="cd20309">
    <property type="entry name" value="cupin_EcSI"/>
    <property type="match status" value="1"/>
</dbReference>
<dbReference type="Gene3D" id="2.60.120.10">
    <property type="entry name" value="Jelly Rolls"/>
    <property type="match status" value="1"/>
</dbReference>
<dbReference type="InterPro" id="IPR010864">
    <property type="entry name" value="D-lyxose_isomer"/>
</dbReference>
<dbReference type="InterPro" id="IPR047581">
    <property type="entry name" value="EcSI_cupin"/>
</dbReference>
<dbReference type="InterPro" id="IPR014710">
    <property type="entry name" value="RmlC-like_jellyroll"/>
</dbReference>
<dbReference type="Pfam" id="PF07385">
    <property type="entry name" value="Lyx_isomer"/>
    <property type="match status" value="1"/>
</dbReference>